<protein>
    <recommendedName>
        <fullName evidence="1">Probable cyclic pyranopterin monophosphate synthase</fullName>
        <ecNumber evidence="1">4.6.1.17</ecNumber>
    </recommendedName>
    <alternativeName>
        <fullName evidence="1">Molybdenum cofactor biosynthesis protein C</fullName>
    </alternativeName>
</protein>
<proteinExistence type="inferred from homology"/>
<reference key="1">
    <citation type="journal article" date="2005" name="Genome Res.">
        <title>Living with two extremes: conclusions from the genome sequence of Natronomonas pharaonis.</title>
        <authorList>
            <person name="Falb M."/>
            <person name="Pfeiffer F."/>
            <person name="Palm P."/>
            <person name="Rodewald K."/>
            <person name="Hickmann V."/>
            <person name="Tittor J."/>
            <person name="Oesterhelt D."/>
        </authorList>
    </citation>
    <scope>NUCLEOTIDE SEQUENCE [LARGE SCALE GENOMIC DNA]</scope>
    <source>
        <strain>ATCC 35678 / DSM 2160 / CIP 103997 / JCM 8858 / NBRC 14720 / NCIMB 2260 / Gabara</strain>
    </source>
</reference>
<dbReference type="EC" id="4.6.1.17" evidence="1"/>
<dbReference type="EMBL" id="CR936257">
    <property type="protein sequence ID" value="CAI49964.1"/>
    <property type="molecule type" value="Genomic_DNA"/>
</dbReference>
<dbReference type="RefSeq" id="WP_011323581.1">
    <property type="nucleotide sequence ID" value="NC_007426.1"/>
</dbReference>
<dbReference type="SMR" id="Q3IPI7"/>
<dbReference type="STRING" id="348780.NP_3746A"/>
<dbReference type="EnsemblBacteria" id="CAI49964">
    <property type="protein sequence ID" value="CAI49964"/>
    <property type="gene ID" value="NP_3746A"/>
</dbReference>
<dbReference type="GeneID" id="3702925"/>
<dbReference type="KEGG" id="nph:NP_3746A"/>
<dbReference type="eggNOG" id="arCOG01530">
    <property type="taxonomic scope" value="Archaea"/>
</dbReference>
<dbReference type="HOGENOM" id="CLU_074693_1_2_2"/>
<dbReference type="OrthoDB" id="10067at2157"/>
<dbReference type="UniPathway" id="UPA00344"/>
<dbReference type="Proteomes" id="UP000002698">
    <property type="component" value="Chromosome"/>
</dbReference>
<dbReference type="GO" id="GO:0061799">
    <property type="term" value="F:cyclic pyranopterin monophosphate synthase activity"/>
    <property type="evidence" value="ECO:0007669"/>
    <property type="project" value="UniProtKB-UniRule"/>
</dbReference>
<dbReference type="GO" id="GO:0006777">
    <property type="term" value="P:Mo-molybdopterin cofactor biosynthetic process"/>
    <property type="evidence" value="ECO:0007669"/>
    <property type="project" value="UniProtKB-UniRule"/>
</dbReference>
<dbReference type="Gene3D" id="3.30.70.640">
    <property type="entry name" value="Molybdopterin cofactor biosynthesis C (MoaC) domain"/>
    <property type="match status" value="1"/>
</dbReference>
<dbReference type="HAMAP" id="MF_01224_A">
    <property type="entry name" value="MoaC_A"/>
    <property type="match status" value="1"/>
</dbReference>
<dbReference type="InterPro" id="IPR023047">
    <property type="entry name" value="Mo_CF_biosynth-C_arc"/>
</dbReference>
<dbReference type="InterPro" id="IPR023045">
    <property type="entry name" value="MoaC"/>
</dbReference>
<dbReference type="InterPro" id="IPR036522">
    <property type="entry name" value="MoaC_sf"/>
</dbReference>
<dbReference type="InterPro" id="IPR050105">
    <property type="entry name" value="MoCo_biosynth_MoaA/MoaC"/>
</dbReference>
<dbReference type="InterPro" id="IPR002820">
    <property type="entry name" value="Mopterin_CF_biosynth-C_dom"/>
</dbReference>
<dbReference type="NCBIfam" id="TIGR00581">
    <property type="entry name" value="moaC"/>
    <property type="match status" value="1"/>
</dbReference>
<dbReference type="NCBIfam" id="NF008999">
    <property type="entry name" value="PRK12343.1"/>
    <property type="match status" value="1"/>
</dbReference>
<dbReference type="PANTHER" id="PTHR22960">
    <property type="entry name" value="MOLYBDOPTERIN COFACTOR SYNTHESIS PROTEIN A"/>
    <property type="match status" value="1"/>
</dbReference>
<dbReference type="Pfam" id="PF01967">
    <property type="entry name" value="MoaC"/>
    <property type="match status" value="1"/>
</dbReference>
<dbReference type="SUPFAM" id="SSF55040">
    <property type="entry name" value="Molybdenum cofactor biosynthesis protein C, MoaC"/>
    <property type="match status" value="1"/>
</dbReference>
<gene>
    <name evidence="1" type="primary">moaC</name>
    <name type="ordered locus">NP_3746A</name>
</gene>
<name>MOAC_NATPD</name>
<feature type="chain" id="PRO_1000085677" description="Probable cyclic pyranopterin monophosphate synthase">
    <location>
        <begin position="1"/>
        <end position="160"/>
    </location>
</feature>
<feature type="region of interest" description="Disordered" evidence="2">
    <location>
        <begin position="1"/>
        <end position="24"/>
    </location>
</feature>
<feature type="compositionally biased region" description="Basic and acidic residues" evidence="2">
    <location>
        <begin position="1"/>
        <end position="12"/>
    </location>
</feature>
<feature type="active site" evidence="1">
    <location>
        <position position="129"/>
    </location>
</feature>
<feature type="binding site" evidence="1">
    <location>
        <begin position="78"/>
        <end position="80"/>
    </location>
    <ligand>
        <name>substrate</name>
    </ligand>
</feature>
<feature type="binding site" evidence="1">
    <location>
        <begin position="114"/>
        <end position="115"/>
    </location>
    <ligand>
        <name>substrate</name>
    </ligand>
</feature>
<organism>
    <name type="scientific">Natronomonas pharaonis (strain ATCC 35678 / DSM 2160 / CIP 103997 / JCM 8858 / NBRC 14720 / NCIMB 2260 / Gabara)</name>
    <name type="common">Halobacterium pharaonis</name>
    <dbReference type="NCBI Taxonomy" id="348780"/>
    <lineage>
        <taxon>Archaea</taxon>
        <taxon>Methanobacteriati</taxon>
        <taxon>Methanobacteriota</taxon>
        <taxon>Stenosarchaea group</taxon>
        <taxon>Halobacteria</taxon>
        <taxon>Halobacteriales</taxon>
        <taxon>Haloarculaceae</taxon>
        <taxon>Natronomonas</taxon>
    </lineage>
</organism>
<accession>Q3IPI7</accession>
<keyword id="KW-0456">Lyase</keyword>
<keyword id="KW-0501">Molybdenum cofactor biosynthesis</keyword>
<keyword id="KW-1185">Reference proteome</keyword>
<comment type="function">
    <text evidence="1">Catalyzes the conversion of (8S)-3',8-cyclo-7,8-dihydroguanosine 5'-triphosphate to cyclic pyranopterin monophosphate (cPMP).</text>
</comment>
<comment type="catalytic activity">
    <reaction evidence="1">
        <text>(8S)-3',8-cyclo-7,8-dihydroguanosine 5'-triphosphate = cyclic pyranopterin phosphate + diphosphate</text>
        <dbReference type="Rhea" id="RHEA:49580"/>
        <dbReference type="ChEBI" id="CHEBI:33019"/>
        <dbReference type="ChEBI" id="CHEBI:59648"/>
        <dbReference type="ChEBI" id="CHEBI:131766"/>
        <dbReference type="EC" id="4.6.1.17"/>
    </reaction>
</comment>
<comment type="pathway">
    <text evidence="1">Cofactor biosynthesis; molybdopterin biosynthesis.</text>
</comment>
<comment type="subunit">
    <text evidence="1">Homohexamer; trimer of dimers.</text>
</comment>
<comment type="similarity">
    <text evidence="1">Belongs to the MoaC family.</text>
</comment>
<sequence>MSDDSELTHVTDDGDAQMVDVGEKPDTARRAVARGEITLQPSTVAAIETNDVEKGDVLAVARVGAIQAVKHTWETVPMCHQIPITNVDTEFSTSETAVELTVAVETTGKTGCEMEALEGVTTGLNVVWDMVKAAEKDADGQYPDTGIDSVEVIEKEKRAL</sequence>
<evidence type="ECO:0000255" key="1">
    <source>
        <dbReference type="HAMAP-Rule" id="MF_01224"/>
    </source>
</evidence>
<evidence type="ECO:0000256" key="2">
    <source>
        <dbReference type="SAM" id="MobiDB-lite"/>
    </source>
</evidence>